<proteinExistence type="evidence at transcript level"/>
<comment type="function">
    <text evidence="1 3 5">Participates in pre-mRNA splicing. Part of the U4/U5/U6 tri-snRNP complex, one of the building blocks of the spliceosome (By similarity). Essential for reproduction. In female gametophyte, is necessary for the egg cell and central cell fate determination and hence reproductive success. Involved in a mechanism that prevents accessory cells from adopting gametic cell fate (PubMed:17326723). Modulates egg cell signaling center that regulates the development of all female gametophytic cells (PubMed:22190635).</text>
</comment>
<comment type="subcellular location">
    <subcellularLocation>
        <location evidence="4">Nucleus speckle</location>
    </subcellularLocation>
    <text evidence="4">Colocalizes with CLO.</text>
</comment>
<comment type="developmental stage">
    <text evidence="3 5">During female gametophyte development, preferentially expressed in the gametic cells.</text>
</comment>
<comment type="disruption phenotype">
    <text evidence="3">Gametophytic lethality due to female gametophyte defect, when homozygous.</text>
</comment>
<sequence length="554" mass="61842">MEPNKDDNVSLAATAQISAPPVLQDASSLPGFSAIPPVVPPSFPPPMAPIPMMPHPPVARPPTFRPPVSQNGGVKTSDSDSESDDEHIEISEESKQVRERQEKALQDLLVKRRAAAMAVPTNDKAVRDRLRRLGEPITLFGEQEMERRARLTQLLTRYDINGQLDKLVKDHEEDVTPKEEVDDEVLEYPFFTEGPKELREARIEIAKFSVKRAAVRIQRAKRRRDDPDEDMDAETKWALKHAKHMALDCSNFGDDRPLTGCSFSRDGKILATCSLSGVTKLWEMPQVTNTIAVLKDHKERATDVVFSPVDDCLATASADRTAKLWKTDGTLLQTFEGHLDRLARVAFHPSGKYLGTTSYDKTWRLWDINTGAELLLQEGHSRSVYGIAFQQDGALAASCGLDSLARVWDLRTGRSILVFQGHIKPVFSVNFSPNGYHLASGGEDNQCRIWDLRMRKSLYIIPAHANLVSQVKYEPQEGYFLATASYDMKVNIWSGRDFSLVKSLAGHESKVASLDITADSSCIATVSHDRTIKLWTSSGNDDEDEEKETMDIDL</sequence>
<gene>
    <name evidence="6" type="primary">LIS</name>
    <name evidence="7" type="synonym">EMB2776</name>
    <name type="ordered locus">At2g41500</name>
    <name type="ORF">T26J13.9</name>
    <name type="ORF">T32G6.2</name>
</gene>
<feature type="chain" id="PRO_0000051153" description="U4/U6 small nuclear ribonucleoprotein PRP4-like protein">
    <location>
        <begin position="1"/>
        <end position="554"/>
    </location>
</feature>
<feature type="repeat" description="WD 1">
    <location>
        <begin position="253"/>
        <end position="292"/>
    </location>
</feature>
<feature type="repeat" description="WD 2">
    <location>
        <begin position="296"/>
        <end position="335"/>
    </location>
</feature>
<feature type="repeat" description="WD 3">
    <location>
        <begin position="337"/>
        <end position="376"/>
    </location>
</feature>
<feature type="repeat" description="WD 4">
    <location>
        <begin position="379"/>
        <end position="418"/>
    </location>
</feature>
<feature type="repeat" description="WD 5">
    <location>
        <begin position="421"/>
        <end position="460"/>
    </location>
</feature>
<feature type="repeat" description="WD 6">
    <location>
        <begin position="463"/>
        <end position="503"/>
    </location>
</feature>
<feature type="repeat" description="WD 7">
    <location>
        <begin position="506"/>
        <end position="545"/>
    </location>
</feature>
<feature type="region of interest" description="Disordered" evidence="2">
    <location>
        <begin position="48"/>
        <end position="99"/>
    </location>
</feature>
<feature type="compositionally biased region" description="Pro residues" evidence="2">
    <location>
        <begin position="48"/>
        <end position="65"/>
    </location>
</feature>
<feature type="compositionally biased region" description="Basic and acidic residues" evidence="2">
    <location>
        <begin position="88"/>
        <end position="99"/>
    </location>
</feature>
<feature type="sequence conflict" description="In Ref. 3; AAP40506 and 5; BAF01385." evidence="7" ref="3 5">
    <original>S</original>
    <variation>P</variation>
    <location>
        <position position="428"/>
    </location>
</feature>
<keyword id="KW-0507">mRNA processing</keyword>
<keyword id="KW-0508">mRNA splicing</keyword>
<keyword id="KW-0539">Nucleus</keyword>
<keyword id="KW-1185">Reference proteome</keyword>
<keyword id="KW-0677">Repeat</keyword>
<keyword id="KW-0747">Spliceosome</keyword>
<keyword id="KW-0853">WD repeat</keyword>
<organism>
    <name type="scientific">Arabidopsis thaliana</name>
    <name type="common">Mouse-ear cress</name>
    <dbReference type="NCBI Taxonomy" id="3702"/>
    <lineage>
        <taxon>Eukaryota</taxon>
        <taxon>Viridiplantae</taxon>
        <taxon>Streptophyta</taxon>
        <taxon>Embryophyta</taxon>
        <taxon>Tracheophyta</taxon>
        <taxon>Spermatophyta</taxon>
        <taxon>Magnoliopsida</taxon>
        <taxon>eudicotyledons</taxon>
        <taxon>Gunneridae</taxon>
        <taxon>Pentapetalae</taxon>
        <taxon>rosids</taxon>
        <taxon>malvids</taxon>
        <taxon>Brassicales</taxon>
        <taxon>Brassicaceae</taxon>
        <taxon>Camelineae</taxon>
        <taxon>Arabidopsis</taxon>
    </lineage>
</organism>
<reference key="1">
    <citation type="journal article" date="1999" name="Nature">
        <title>Sequence and analysis of chromosome 2 of the plant Arabidopsis thaliana.</title>
        <authorList>
            <person name="Lin X."/>
            <person name="Kaul S."/>
            <person name="Rounsley S.D."/>
            <person name="Shea T.P."/>
            <person name="Benito M.-I."/>
            <person name="Town C.D."/>
            <person name="Fujii C.Y."/>
            <person name="Mason T.M."/>
            <person name="Bowman C.L."/>
            <person name="Barnstead M.E."/>
            <person name="Feldblyum T.V."/>
            <person name="Buell C.R."/>
            <person name="Ketchum K.A."/>
            <person name="Lee J.J."/>
            <person name="Ronning C.M."/>
            <person name="Koo H.L."/>
            <person name="Moffat K.S."/>
            <person name="Cronin L.A."/>
            <person name="Shen M."/>
            <person name="Pai G."/>
            <person name="Van Aken S."/>
            <person name="Umayam L."/>
            <person name="Tallon L.J."/>
            <person name="Gill J.E."/>
            <person name="Adams M.D."/>
            <person name="Carrera A.J."/>
            <person name="Creasy T.H."/>
            <person name="Goodman H.M."/>
            <person name="Somerville C.R."/>
            <person name="Copenhaver G.P."/>
            <person name="Preuss D."/>
            <person name="Nierman W.C."/>
            <person name="White O."/>
            <person name="Eisen J.A."/>
            <person name="Salzberg S.L."/>
            <person name="Fraser C.M."/>
            <person name="Venter J.C."/>
        </authorList>
    </citation>
    <scope>NUCLEOTIDE SEQUENCE [LARGE SCALE GENOMIC DNA]</scope>
    <source>
        <strain>cv. Columbia</strain>
    </source>
</reference>
<reference key="2">
    <citation type="journal article" date="2017" name="Plant J.">
        <title>Araport11: a complete reannotation of the Arabidopsis thaliana reference genome.</title>
        <authorList>
            <person name="Cheng C.Y."/>
            <person name="Krishnakumar V."/>
            <person name="Chan A.P."/>
            <person name="Thibaud-Nissen F."/>
            <person name="Schobel S."/>
            <person name="Town C.D."/>
        </authorList>
    </citation>
    <scope>GENOME REANNOTATION</scope>
    <source>
        <strain>cv. Columbia</strain>
    </source>
</reference>
<reference key="3">
    <citation type="journal article" date="2003" name="Science">
        <title>Empirical analysis of transcriptional activity in the Arabidopsis genome.</title>
        <authorList>
            <person name="Yamada K."/>
            <person name="Lim J."/>
            <person name="Dale J.M."/>
            <person name="Chen H."/>
            <person name="Shinn P."/>
            <person name="Palm C.J."/>
            <person name="Southwick A.M."/>
            <person name="Wu H.C."/>
            <person name="Kim C.J."/>
            <person name="Nguyen M."/>
            <person name="Pham P.K."/>
            <person name="Cheuk R.F."/>
            <person name="Karlin-Newmann G."/>
            <person name="Liu S.X."/>
            <person name="Lam B."/>
            <person name="Sakano H."/>
            <person name="Wu T."/>
            <person name="Yu G."/>
            <person name="Miranda M."/>
            <person name="Quach H.L."/>
            <person name="Tripp M."/>
            <person name="Chang C.H."/>
            <person name="Lee J.M."/>
            <person name="Toriumi M.J."/>
            <person name="Chan M.M."/>
            <person name="Tang C.C."/>
            <person name="Onodera C.S."/>
            <person name="Deng J.M."/>
            <person name="Akiyama K."/>
            <person name="Ansari Y."/>
            <person name="Arakawa T."/>
            <person name="Banh J."/>
            <person name="Banno F."/>
            <person name="Bowser L."/>
            <person name="Brooks S.Y."/>
            <person name="Carninci P."/>
            <person name="Chao Q."/>
            <person name="Choy N."/>
            <person name="Enju A."/>
            <person name="Goldsmith A.D."/>
            <person name="Gurjal M."/>
            <person name="Hansen N.F."/>
            <person name="Hayashizaki Y."/>
            <person name="Johnson-Hopson C."/>
            <person name="Hsuan V.W."/>
            <person name="Iida K."/>
            <person name="Karnes M."/>
            <person name="Khan S."/>
            <person name="Koesema E."/>
            <person name="Ishida J."/>
            <person name="Jiang P.X."/>
            <person name="Jones T."/>
            <person name="Kawai J."/>
            <person name="Kamiya A."/>
            <person name="Meyers C."/>
            <person name="Nakajima M."/>
            <person name="Narusaka M."/>
            <person name="Seki M."/>
            <person name="Sakurai T."/>
            <person name="Satou M."/>
            <person name="Tamse R."/>
            <person name="Vaysberg M."/>
            <person name="Wallender E.K."/>
            <person name="Wong C."/>
            <person name="Yamamura Y."/>
            <person name="Yuan S."/>
            <person name="Shinozaki K."/>
            <person name="Davis R.W."/>
            <person name="Theologis A."/>
            <person name="Ecker J.R."/>
        </authorList>
    </citation>
    <scope>NUCLEOTIDE SEQUENCE [LARGE SCALE MRNA]</scope>
    <source>
        <strain>cv. Columbia</strain>
    </source>
</reference>
<reference key="4">
    <citation type="submission" date="2005-02" db="EMBL/GenBank/DDBJ databases">
        <title>Arabidopsis ORF clones.</title>
        <authorList>
            <person name="Cheuk R.F."/>
            <person name="Chen H."/>
            <person name="Kim C.J."/>
            <person name="Shinn P."/>
            <person name="Ecker J.R."/>
        </authorList>
    </citation>
    <scope>NUCLEOTIDE SEQUENCE [LARGE SCALE MRNA]</scope>
    <source>
        <strain>cv. Columbia</strain>
    </source>
</reference>
<reference key="5">
    <citation type="submission" date="2006-07" db="EMBL/GenBank/DDBJ databases">
        <title>Large-scale analysis of RIKEN Arabidopsis full-length (RAFL) cDNAs.</title>
        <authorList>
            <person name="Totoki Y."/>
            <person name="Seki M."/>
            <person name="Ishida J."/>
            <person name="Nakajima M."/>
            <person name="Enju A."/>
            <person name="Kamiya A."/>
            <person name="Narusaka M."/>
            <person name="Shin-i T."/>
            <person name="Nakagawa M."/>
            <person name="Sakamoto N."/>
            <person name="Oishi K."/>
            <person name="Kohara Y."/>
            <person name="Kobayashi M."/>
            <person name="Toyoda A."/>
            <person name="Sakaki Y."/>
            <person name="Sakurai T."/>
            <person name="Iida K."/>
            <person name="Akiyama K."/>
            <person name="Satou M."/>
            <person name="Toyoda T."/>
            <person name="Konagaya A."/>
            <person name="Carninci P."/>
            <person name="Kawai J."/>
            <person name="Hayashizaki Y."/>
            <person name="Shinozaki K."/>
        </authorList>
    </citation>
    <scope>NUCLEOTIDE SEQUENCE [LARGE SCALE MRNA]</scope>
    <source>
        <strain>cv. Columbia</strain>
    </source>
</reference>
<reference key="6">
    <citation type="journal article" date="2007" name="PLoS Biol.">
        <title>LACHESIS restricts gametic cell fate in the female gametophyte of Arabidopsis.</title>
        <authorList>
            <person name="Gross-Hardt R."/>
            <person name="Kaegi C."/>
            <person name="Baumann N."/>
            <person name="Moore J.M."/>
            <person name="Baskar R."/>
            <person name="Gagliano W.B."/>
            <person name="Juergens G."/>
            <person name="Grossniklaus U."/>
        </authorList>
    </citation>
    <scope>FUNCTION</scope>
    <scope>DEVELOPMENTAL STAGE</scope>
    <scope>DISRUPTION PHENOTYPE</scope>
</reference>
<reference key="7">
    <citation type="journal article" date="2008" name="Plant J.">
        <title>CLO/GFA1 and ATO are novel regulators of gametic cell fate in plants.</title>
        <authorList>
            <person name="Moll C."/>
            <person name="von Lyncker L."/>
            <person name="Zimmermann S."/>
            <person name="Kaegi C."/>
            <person name="Baumann N."/>
            <person name="Twell D."/>
            <person name="Grossniklaus U."/>
            <person name="Gross-Hardt R."/>
        </authorList>
    </citation>
    <scope>SUBCELLULAR LOCATION</scope>
</reference>
<reference key="8">
    <citation type="journal article" date="2012" name="Development">
        <title>LACHESIS-dependent egg-cell signaling regulates the development of female gametophytic cells.</title>
        <authorList>
            <person name="Voelz R."/>
            <person name="von Lyncker L."/>
            <person name="Baumann N."/>
            <person name="Dresselhaus T."/>
            <person name="Sprunck S."/>
            <person name="Gross-Hardt R."/>
        </authorList>
    </citation>
    <scope>FUNCTION</scope>
    <scope>DEVELOPMENTAL STAGE</scope>
</reference>
<protein>
    <recommendedName>
        <fullName evidence="7">U4/U6 small nuclear ribonucleoprotein PRP4-like protein</fullName>
    </recommendedName>
    <alternativeName>
        <fullName evidence="7">Protein EMBRYO DEFECTIVE 2776</fullName>
    </alternativeName>
    <alternativeName>
        <fullName evidence="6">Protein LACHESIS</fullName>
    </alternativeName>
</protein>
<dbReference type="EMBL" id="AC002510">
    <property type="protein sequence ID" value="AAB84332.1"/>
    <property type="molecule type" value="Genomic_DNA"/>
</dbReference>
<dbReference type="EMBL" id="AC004625">
    <property type="protein sequence ID" value="AAM14969.1"/>
    <property type="molecule type" value="Genomic_DNA"/>
</dbReference>
<dbReference type="EMBL" id="CP002685">
    <property type="protein sequence ID" value="AEC09991.1"/>
    <property type="molecule type" value="Genomic_DNA"/>
</dbReference>
<dbReference type="EMBL" id="CP002685">
    <property type="protein sequence ID" value="ANM62834.1"/>
    <property type="molecule type" value="Genomic_DNA"/>
</dbReference>
<dbReference type="EMBL" id="BT008700">
    <property type="protein sequence ID" value="AAP40506.1"/>
    <property type="molecule type" value="mRNA"/>
</dbReference>
<dbReference type="EMBL" id="BT020589">
    <property type="protein sequence ID" value="AAW80862.1"/>
    <property type="molecule type" value="mRNA"/>
</dbReference>
<dbReference type="EMBL" id="AK229530">
    <property type="protein sequence ID" value="BAF01385.1"/>
    <property type="molecule type" value="mRNA"/>
</dbReference>
<dbReference type="PIR" id="T00806">
    <property type="entry name" value="T02445"/>
</dbReference>
<dbReference type="RefSeq" id="NP_001324961.1">
    <property type="nucleotide sequence ID" value="NM_001336916.1"/>
</dbReference>
<dbReference type="RefSeq" id="NP_181681.1">
    <property type="nucleotide sequence ID" value="NM_129713.3"/>
</dbReference>
<dbReference type="SMR" id="O22212"/>
<dbReference type="BioGRID" id="4085">
    <property type="interactions" value="9"/>
</dbReference>
<dbReference type="FunCoup" id="O22212">
    <property type="interactions" value="3919"/>
</dbReference>
<dbReference type="STRING" id="3702.O22212"/>
<dbReference type="iPTMnet" id="O22212"/>
<dbReference type="MetOSite" id="O22212"/>
<dbReference type="PaxDb" id="3702-AT2G41500.1"/>
<dbReference type="ProteomicsDB" id="226219"/>
<dbReference type="EnsemblPlants" id="AT2G41500.1">
    <property type="protein sequence ID" value="AT2G41500.1"/>
    <property type="gene ID" value="AT2G41500"/>
</dbReference>
<dbReference type="EnsemblPlants" id="AT2G41500.2">
    <property type="protein sequence ID" value="AT2G41500.2"/>
    <property type="gene ID" value="AT2G41500"/>
</dbReference>
<dbReference type="GeneID" id="818748"/>
<dbReference type="Gramene" id="AT2G41500.1">
    <property type="protein sequence ID" value="AT2G41500.1"/>
    <property type="gene ID" value="AT2G41500"/>
</dbReference>
<dbReference type="Gramene" id="AT2G41500.2">
    <property type="protein sequence ID" value="AT2G41500.2"/>
    <property type="gene ID" value="AT2G41500"/>
</dbReference>
<dbReference type="KEGG" id="ath:AT2G41500"/>
<dbReference type="Araport" id="AT2G41500"/>
<dbReference type="TAIR" id="AT2G41500">
    <property type="gene designation" value="LIS"/>
</dbReference>
<dbReference type="eggNOG" id="KOG0272">
    <property type="taxonomic scope" value="Eukaryota"/>
</dbReference>
<dbReference type="HOGENOM" id="CLU_000288_57_20_1"/>
<dbReference type="InParanoid" id="O22212"/>
<dbReference type="OMA" id="LNEPICY"/>
<dbReference type="OrthoDB" id="540662at2759"/>
<dbReference type="PhylomeDB" id="O22212"/>
<dbReference type="PRO" id="PR:O22212"/>
<dbReference type="Proteomes" id="UP000006548">
    <property type="component" value="Chromosome 2"/>
</dbReference>
<dbReference type="ExpressionAtlas" id="O22212">
    <property type="expression patterns" value="baseline and differential"/>
</dbReference>
<dbReference type="GO" id="GO:0016607">
    <property type="term" value="C:nuclear speck"/>
    <property type="evidence" value="ECO:0000314"/>
    <property type="project" value="TAIR"/>
</dbReference>
<dbReference type="GO" id="GO:0005681">
    <property type="term" value="C:spliceosomal complex"/>
    <property type="evidence" value="ECO:0000250"/>
    <property type="project" value="TAIR"/>
</dbReference>
<dbReference type="GO" id="GO:0001709">
    <property type="term" value="P:cell fate determination"/>
    <property type="evidence" value="ECO:0000315"/>
    <property type="project" value="TAIR"/>
</dbReference>
<dbReference type="GO" id="GO:0007267">
    <property type="term" value="P:cell-cell signaling"/>
    <property type="evidence" value="ECO:0000315"/>
    <property type="project" value="TAIR"/>
</dbReference>
<dbReference type="GO" id="GO:0009553">
    <property type="term" value="P:embryo sac development"/>
    <property type="evidence" value="ECO:0000315"/>
    <property type="project" value="TAIR"/>
</dbReference>
<dbReference type="GO" id="GO:0009560">
    <property type="term" value="P:embryo sac egg cell differentiation"/>
    <property type="evidence" value="ECO:0000315"/>
    <property type="project" value="TAIR"/>
</dbReference>
<dbReference type="GO" id="GO:0000398">
    <property type="term" value="P:mRNA splicing, via spliceosome"/>
    <property type="evidence" value="ECO:0000250"/>
    <property type="project" value="TAIR"/>
</dbReference>
<dbReference type="CDD" id="cd00200">
    <property type="entry name" value="WD40"/>
    <property type="match status" value="1"/>
</dbReference>
<dbReference type="FunFam" id="2.130.10.10:FF:000689">
    <property type="entry name" value="U4/U6 small nuclear ribonucleoprotein PRP4-like protein"/>
    <property type="match status" value="1"/>
</dbReference>
<dbReference type="FunFam" id="2.130.10.10:FF:002137">
    <property type="entry name" value="U4/U6 small nuclear ribonucleoprotein PRP4-like protein"/>
    <property type="match status" value="1"/>
</dbReference>
<dbReference type="Gene3D" id="4.10.280.110">
    <property type="entry name" value="Pre-mRNA processing factor 4 domain"/>
    <property type="match status" value="1"/>
</dbReference>
<dbReference type="Gene3D" id="2.130.10.10">
    <property type="entry name" value="YVTN repeat-like/Quinoprotein amine dehydrogenase"/>
    <property type="match status" value="2"/>
</dbReference>
<dbReference type="InterPro" id="IPR020472">
    <property type="entry name" value="G-protein_beta_WD-40_rep"/>
</dbReference>
<dbReference type="InterPro" id="IPR014906">
    <property type="entry name" value="PRP4-like"/>
</dbReference>
<dbReference type="InterPro" id="IPR036285">
    <property type="entry name" value="PRP4-like_sf"/>
</dbReference>
<dbReference type="InterPro" id="IPR015943">
    <property type="entry name" value="WD40/YVTN_repeat-like_dom_sf"/>
</dbReference>
<dbReference type="InterPro" id="IPR019775">
    <property type="entry name" value="WD40_repeat_CS"/>
</dbReference>
<dbReference type="InterPro" id="IPR036322">
    <property type="entry name" value="WD40_repeat_dom_sf"/>
</dbReference>
<dbReference type="InterPro" id="IPR001680">
    <property type="entry name" value="WD40_rpt"/>
</dbReference>
<dbReference type="PANTHER" id="PTHR19846:SF0">
    <property type="entry name" value="PRE-MRNA PROCESSING FACTOR 4"/>
    <property type="match status" value="1"/>
</dbReference>
<dbReference type="PANTHER" id="PTHR19846">
    <property type="entry name" value="WD40 REPEAT PROTEIN"/>
    <property type="match status" value="1"/>
</dbReference>
<dbReference type="Pfam" id="PF08799">
    <property type="entry name" value="PRP4"/>
    <property type="match status" value="1"/>
</dbReference>
<dbReference type="Pfam" id="PF00400">
    <property type="entry name" value="WD40"/>
    <property type="match status" value="7"/>
</dbReference>
<dbReference type="PRINTS" id="PR00320">
    <property type="entry name" value="GPROTEINBRPT"/>
</dbReference>
<dbReference type="SMART" id="SM00500">
    <property type="entry name" value="SFM"/>
    <property type="match status" value="1"/>
</dbReference>
<dbReference type="SMART" id="SM00320">
    <property type="entry name" value="WD40"/>
    <property type="match status" value="7"/>
</dbReference>
<dbReference type="SUPFAM" id="SSF158230">
    <property type="entry name" value="PRP4-like"/>
    <property type="match status" value="1"/>
</dbReference>
<dbReference type="SUPFAM" id="SSF50978">
    <property type="entry name" value="WD40 repeat-like"/>
    <property type="match status" value="1"/>
</dbReference>
<dbReference type="PROSITE" id="PS00678">
    <property type="entry name" value="WD_REPEATS_1"/>
    <property type="match status" value="3"/>
</dbReference>
<dbReference type="PROSITE" id="PS50082">
    <property type="entry name" value="WD_REPEATS_2"/>
    <property type="match status" value="6"/>
</dbReference>
<dbReference type="PROSITE" id="PS50294">
    <property type="entry name" value="WD_REPEATS_REGION"/>
    <property type="match status" value="1"/>
</dbReference>
<accession>O22212</accession>
<accession>Q0WNB5</accession>
<accession>Q7GAP3</accession>
<accession>Q7Y1Z3</accession>
<evidence type="ECO:0000250" key="1">
    <source>
        <dbReference type="UniProtKB" id="O43172"/>
    </source>
</evidence>
<evidence type="ECO:0000256" key="2">
    <source>
        <dbReference type="SAM" id="MobiDB-lite"/>
    </source>
</evidence>
<evidence type="ECO:0000269" key="3">
    <source>
    </source>
</evidence>
<evidence type="ECO:0000269" key="4">
    <source>
    </source>
</evidence>
<evidence type="ECO:0000269" key="5">
    <source>
    </source>
</evidence>
<evidence type="ECO:0000303" key="6">
    <source>
    </source>
</evidence>
<evidence type="ECO:0000305" key="7"/>
<name>PRP4L_ARATH</name>